<gene>
    <name evidence="2" type="primary">psaB</name>
</gene>
<sequence length="743" mass="83513">MATKFPKFSQDLAQDPTTRRIWYAMATGNDFESHDGMTEENLYQKIFATHFGHVAIIFLWASSLLFHVAWQGNFEQWIKDPIHIRPIAHAIWDPQFGKPAIEAFTQGGANYPVNISYSGIYHWWYTIGMRTNNDLYMGAVFLLILASVFLFAGWLHLQPKFRPSLSWFKSAEPRLNHHLAGLFGVSSLAWAGHLIHVAIPESRGQHVGWNNFLSTLPHPAGLQPFFTGNWGVYASDPDTANHVFGTSQGAGTAILTFLGGFHPQTESLWLTDMAHHHLAIAVIFIIAGHMYRTNFGIGHSIKEMLNSKAGLVPGTNSEGQFNLPHQGLYDTYNNSLHFQLGIHLAALGTITSLVAQHMYAMPPYAFIAKDYTTQAALYTHHQYIAIFLMLGAFAHGAIFWVRDYDPEQNKGNVLDRVLKHKEAIISHLSWVSLFLGFHTLGLYVHNDVVVAFGTPEKQILIEPVFAQFIQASHGKVLYGLNVLLSNPDSVAYTAYPNYGNVWLQGWLDAINSGTNSLFLTIGPGDFLVHHAFALALHTTVLILVKGALDARGSKLMPDKKDFGYAFPCDGPGRGGTCDISAWDAFYLATFWALNTVGWVTFYWHWKHLGIWQGNVAQFNESSTYLMGWFRDYLWANSAQLINGYNPYGMNNLSVWAWMFLFGHLVWATGFMFLISWRGYWQELIETLVWAHERTPLANLVRWKDKPVALSIVQARLVGLTHFTVGYVLTYAAFLIASTAGKFG</sequence>
<organism>
    <name type="scientific">Mastigocladus laminosus</name>
    <name type="common">Fischerella sp.</name>
    <dbReference type="NCBI Taxonomy" id="83541"/>
    <lineage>
        <taxon>Bacteria</taxon>
        <taxon>Bacillati</taxon>
        <taxon>Cyanobacteriota</taxon>
        <taxon>Cyanophyceae</taxon>
        <taxon>Nostocales</taxon>
        <taxon>Hapalosiphonaceae</taxon>
        <taxon>Mastigocladus</taxon>
    </lineage>
</organism>
<evidence type="ECO:0000250" key="1"/>
<evidence type="ECO:0000255" key="2">
    <source>
        <dbReference type="HAMAP-Rule" id="MF_00482"/>
    </source>
</evidence>
<proteinExistence type="inferred from homology"/>
<protein>
    <recommendedName>
        <fullName evidence="2">Photosystem I P700 chlorophyll a apoprotein A2</fullName>
        <ecNumber evidence="2">1.97.1.12</ecNumber>
    </recommendedName>
    <alternativeName>
        <fullName evidence="2">PsaB</fullName>
    </alternativeName>
</protein>
<reference key="1">
    <citation type="online journal article" date="1998" name="Plant Gene Register">
        <title>Molecular cloning of the psaA and psaB genes for the core proteins of photosystem I from the thermophilic cyanobacterium Mastigocladus laminosus.</title>
        <authorList>
            <person name="Sun J."/>
            <person name="He Z.-Y."/>
            <person name="Nechushtai R."/>
            <person name="Chitnis P.R."/>
        </authorList>
        <locator>PGR98-041</locator>
    </citation>
    <scope>NUCLEOTIDE SEQUENCE [GENOMIC DNA]</scope>
    <source>
        <strain>PCC 7605</strain>
    </source>
</reference>
<comment type="function">
    <text evidence="2">PsaA and PsaB bind P700, the primary electron donor of photosystem I (PSI), as well as the electron acceptors A0, A1 and FX. PSI is a plastocyanin/cytochrome c6-ferredoxin oxidoreductase, converting photonic excitation into a charge separation, which transfers an electron from the donor P700 chlorophyll pair to the spectroscopically characterized acceptors A0, A1, FX, FA and FB in turn. Oxidized P700 is reduced on the lumenal side of the thylakoid membrane by plastocyanin or cytochrome c6.</text>
</comment>
<comment type="catalytic activity">
    <reaction evidence="2">
        <text>reduced [plastocyanin] + hnu + oxidized [2Fe-2S]-[ferredoxin] = oxidized [plastocyanin] + reduced [2Fe-2S]-[ferredoxin]</text>
        <dbReference type="Rhea" id="RHEA:30407"/>
        <dbReference type="Rhea" id="RHEA-COMP:10000"/>
        <dbReference type="Rhea" id="RHEA-COMP:10001"/>
        <dbReference type="Rhea" id="RHEA-COMP:10039"/>
        <dbReference type="Rhea" id="RHEA-COMP:10040"/>
        <dbReference type="ChEBI" id="CHEBI:29036"/>
        <dbReference type="ChEBI" id="CHEBI:30212"/>
        <dbReference type="ChEBI" id="CHEBI:33737"/>
        <dbReference type="ChEBI" id="CHEBI:33738"/>
        <dbReference type="ChEBI" id="CHEBI:49552"/>
        <dbReference type="EC" id="1.97.1.12"/>
    </reaction>
</comment>
<comment type="cofactor">
    <text evidence="2">PSI electron transfer chain: 5 chlorophyll a, 1 chlorophyll a', 2 phylloquinones and 3 4Fe-4S clusters. PSI core antenna: 90 chlorophyll a, 22 carotenoids, 3 phospholipids and 1 galactolipid. P700 is a chlorophyll a/chlorophyll a' dimer, A0 is one or more chlorophyll a, A1 is one or both phylloquinones and FX is a shared 4Fe-4S iron-sulfur center.</text>
</comment>
<comment type="subunit">
    <text evidence="2">The PsaA/B heterodimer binds the P700 chlorophyll special pair and subsequent electron acceptors. PSI consists of a core antenna complex that captures photons, and an electron transfer chain that converts photonic excitation into a charge separation. The cyanobacterial PSI reaction center is composed of one copy each of PsaA,B,C,D,E,F,I,J,K,L,M and X, and forms trimeric complexes.</text>
</comment>
<comment type="subcellular location">
    <subcellularLocation>
        <location evidence="2">Cellular thylakoid membrane</location>
        <topology evidence="2">Multi-pass membrane protein</topology>
    </subcellularLocation>
</comment>
<comment type="similarity">
    <text evidence="2">Belongs to the PsaA/PsaB family.</text>
</comment>
<dbReference type="EC" id="1.97.1.12" evidence="2"/>
<dbReference type="EMBL" id="AF038558">
    <property type="protein sequence ID" value="AAC12867.1"/>
    <property type="molecule type" value="Genomic_DNA"/>
</dbReference>
<dbReference type="SMR" id="O52475"/>
<dbReference type="GO" id="GO:0009522">
    <property type="term" value="C:photosystem I"/>
    <property type="evidence" value="ECO:0007669"/>
    <property type="project" value="UniProtKB-KW"/>
</dbReference>
<dbReference type="GO" id="GO:0031676">
    <property type="term" value="C:plasma membrane-derived thylakoid membrane"/>
    <property type="evidence" value="ECO:0007669"/>
    <property type="project" value="UniProtKB-SubCell"/>
</dbReference>
<dbReference type="GO" id="GO:0051539">
    <property type="term" value="F:4 iron, 4 sulfur cluster binding"/>
    <property type="evidence" value="ECO:0007669"/>
    <property type="project" value="UniProtKB-KW"/>
</dbReference>
<dbReference type="GO" id="GO:0016168">
    <property type="term" value="F:chlorophyll binding"/>
    <property type="evidence" value="ECO:0007669"/>
    <property type="project" value="UniProtKB-KW"/>
</dbReference>
<dbReference type="GO" id="GO:0009055">
    <property type="term" value="F:electron transfer activity"/>
    <property type="evidence" value="ECO:0007669"/>
    <property type="project" value="UniProtKB-UniRule"/>
</dbReference>
<dbReference type="GO" id="GO:0000287">
    <property type="term" value="F:magnesium ion binding"/>
    <property type="evidence" value="ECO:0007669"/>
    <property type="project" value="UniProtKB-UniRule"/>
</dbReference>
<dbReference type="GO" id="GO:0016491">
    <property type="term" value="F:oxidoreductase activity"/>
    <property type="evidence" value="ECO:0007669"/>
    <property type="project" value="UniProtKB-KW"/>
</dbReference>
<dbReference type="GO" id="GO:0015979">
    <property type="term" value="P:photosynthesis"/>
    <property type="evidence" value="ECO:0007669"/>
    <property type="project" value="UniProtKB-UniRule"/>
</dbReference>
<dbReference type="FunFam" id="1.20.1130.10:FF:000001">
    <property type="entry name" value="Photosystem I P700 chlorophyll a apoprotein A2"/>
    <property type="match status" value="1"/>
</dbReference>
<dbReference type="Gene3D" id="1.20.1130.10">
    <property type="entry name" value="Photosystem I PsaA/PsaB"/>
    <property type="match status" value="1"/>
</dbReference>
<dbReference type="HAMAP" id="MF_00482">
    <property type="entry name" value="PSI_PsaB"/>
    <property type="match status" value="1"/>
</dbReference>
<dbReference type="InterPro" id="IPR001280">
    <property type="entry name" value="PSI_PsaA/B"/>
</dbReference>
<dbReference type="InterPro" id="IPR020586">
    <property type="entry name" value="PSI_PsaA/B_CS"/>
</dbReference>
<dbReference type="InterPro" id="IPR036408">
    <property type="entry name" value="PSI_PsaA/B_sf"/>
</dbReference>
<dbReference type="InterPro" id="IPR006244">
    <property type="entry name" value="PSI_PsaB"/>
</dbReference>
<dbReference type="NCBIfam" id="TIGR01336">
    <property type="entry name" value="psaB"/>
    <property type="match status" value="1"/>
</dbReference>
<dbReference type="PANTHER" id="PTHR30128">
    <property type="entry name" value="OUTER MEMBRANE PROTEIN, OMPA-RELATED"/>
    <property type="match status" value="1"/>
</dbReference>
<dbReference type="PANTHER" id="PTHR30128:SF19">
    <property type="entry name" value="PHOTOSYSTEM I P700 CHLOROPHYLL A APOPROTEIN A1-RELATED"/>
    <property type="match status" value="1"/>
</dbReference>
<dbReference type="Pfam" id="PF00223">
    <property type="entry name" value="PsaA_PsaB"/>
    <property type="match status" value="1"/>
</dbReference>
<dbReference type="PIRSF" id="PIRSF002905">
    <property type="entry name" value="PSI_A"/>
    <property type="match status" value="1"/>
</dbReference>
<dbReference type="PRINTS" id="PR00257">
    <property type="entry name" value="PHOTSYSPSAAB"/>
</dbReference>
<dbReference type="SUPFAM" id="SSF81558">
    <property type="entry name" value="Photosystem I subunits PsaA/PsaB"/>
    <property type="match status" value="1"/>
</dbReference>
<dbReference type="PROSITE" id="PS00419">
    <property type="entry name" value="PHOTOSYSTEM_I_PSAAB"/>
    <property type="match status" value="1"/>
</dbReference>
<name>PSAB_MASLA</name>
<accession>O52475</accession>
<feature type="initiator methionine" description="Removed" evidence="1">
    <location>
        <position position="1"/>
    </location>
</feature>
<feature type="chain" id="PRO_0000088645" description="Photosystem I P700 chlorophyll a apoprotein A2">
    <location>
        <begin position="2"/>
        <end position="743"/>
    </location>
</feature>
<feature type="transmembrane region" description="Helical; Name=I" evidence="2">
    <location>
        <begin position="46"/>
        <end position="69"/>
    </location>
</feature>
<feature type="transmembrane region" description="Helical; Name=II" evidence="2">
    <location>
        <begin position="135"/>
        <end position="158"/>
    </location>
</feature>
<feature type="transmembrane region" description="Helical; Name=III" evidence="2">
    <location>
        <begin position="175"/>
        <end position="199"/>
    </location>
</feature>
<feature type="transmembrane region" description="Helical; Name=IV" evidence="2">
    <location>
        <begin position="273"/>
        <end position="291"/>
    </location>
</feature>
<feature type="transmembrane region" description="Helical; Name=V" evidence="2">
    <location>
        <begin position="336"/>
        <end position="359"/>
    </location>
</feature>
<feature type="transmembrane region" description="Helical; Name=VI" evidence="2">
    <location>
        <begin position="375"/>
        <end position="401"/>
    </location>
</feature>
<feature type="transmembrane region" description="Helical; Name=VII" evidence="2">
    <location>
        <begin position="423"/>
        <end position="445"/>
    </location>
</feature>
<feature type="transmembrane region" description="Helical; Name=VIII" evidence="2">
    <location>
        <begin position="526"/>
        <end position="544"/>
    </location>
</feature>
<feature type="transmembrane region" description="Helical; Name=IX" evidence="2">
    <location>
        <begin position="584"/>
        <end position="605"/>
    </location>
</feature>
<feature type="transmembrane region" description="Helical; Name=X" evidence="2">
    <location>
        <begin position="652"/>
        <end position="674"/>
    </location>
</feature>
<feature type="transmembrane region" description="Helical; Name=XI" evidence="2">
    <location>
        <begin position="716"/>
        <end position="736"/>
    </location>
</feature>
<feature type="binding site" evidence="2">
    <location>
        <position position="568"/>
    </location>
    <ligand>
        <name>[4Fe-4S] cluster</name>
        <dbReference type="ChEBI" id="CHEBI:49883"/>
        <note>ligand shared between dimeric partners</note>
    </ligand>
</feature>
<feature type="binding site" evidence="2">
    <location>
        <position position="577"/>
    </location>
    <ligand>
        <name>[4Fe-4S] cluster</name>
        <dbReference type="ChEBI" id="CHEBI:49883"/>
        <note>ligand shared between dimeric partners</note>
    </ligand>
</feature>
<feature type="binding site" description="axial binding residue" evidence="2">
    <location>
        <position position="663"/>
    </location>
    <ligand>
        <name>chlorophyll a</name>
        <dbReference type="ChEBI" id="CHEBI:58416"/>
        <label>B1</label>
    </ligand>
    <ligandPart>
        <name>Mg</name>
        <dbReference type="ChEBI" id="CHEBI:25107"/>
    </ligandPart>
</feature>
<feature type="binding site" description="axial binding residue" evidence="2">
    <location>
        <position position="671"/>
    </location>
    <ligand>
        <name>chlorophyll a</name>
        <dbReference type="ChEBI" id="CHEBI:58416"/>
        <label>B3</label>
    </ligand>
    <ligandPart>
        <name>Mg</name>
        <dbReference type="ChEBI" id="CHEBI:25107"/>
    </ligandPart>
</feature>
<feature type="binding site" evidence="2">
    <location>
        <position position="679"/>
    </location>
    <ligand>
        <name>chlorophyll a</name>
        <dbReference type="ChEBI" id="CHEBI:58416"/>
        <label>B3</label>
    </ligand>
</feature>
<feature type="binding site" evidence="2">
    <location>
        <position position="680"/>
    </location>
    <ligand>
        <name>phylloquinone</name>
        <dbReference type="ChEBI" id="CHEBI:18067"/>
        <label>B</label>
    </ligand>
</feature>
<keyword id="KW-0004">4Fe-4S</keyword>
<keyword id="KW-0148">Chlorophyll</keyword>
<keyword id="KW-0157">Chromophore</keyword>
<keyword id="KW-0249">Electron transport</keyword>
<keyword id="KW-0408">Iron</keyword>
<keyword id="KW-0411">Iron-sulfur</keyword>
<keyword id="KW-0460">Magnesium</keyword>
<keyword id="KW-0472">Membrane</keyword>
<keyword id="KW-0479">Metal-binding</keyword>
<keyword id="KW-0560">Oxidoreductase</keyword>
<keyword id="KW-0602">Photosynthesis</keyword>
<keyword id="KW-0603">Photosystem I</keyword>
<keyword id="KW-0793">Thylakoid</keyword>
<keyword id="KW-0812">Transmembrane</keyword>
<keyword id="KW-1133">Transmembrane helix</keyword>
<keyword id="KW-0813">Transport</keyword>